<proteinExistence type="inferred from homology"/>
<accession>Q493J8</accession>
<evidence type="ECO:0000255" key="1">
    <source>
        <dbReference type="HAMAP-Rule" id="MF_01367"/>
    </source>
</evidence>
<evidence type="ECO:0000305" key="2"/>
<feature type="chain" id="PRO_1000055524" description="Large ribosomal subunit protein uL14">
    <location>
        <begin position="1"/>
        <end position="123"/>
    </location>
</feature>
<gene>
    <name evidence="1" type="primary">rplN</name>
    <name type="ordered locus">BPEN_208</name>
</gene>
<sequence length="123" mass="13534">MIQERTILNVADNSGARYAMCIKVLGGSGRRYANIGDVIKVAIKEAVPRAKVKKGDVLKAVVVRTKKGVRRLDGSIIRFDNNACVLLNDTNAQPIGTRIFGPVTRELRNEKFMKIISLAPEVL</sequence>
<keyword id="KW-1185">Reference proteome</keyword>
<keyword id="KW-0687">Ribonucleoprotein</keyword>
<keyword id="KW-0689">Ribosomal protein</keyword>
<keyword id="KW-0694">RNA-binding</keyword>
<keyword id="KW-0699">rRNA-binding</keyword>
<comment type="function">
    <text evidence="1">Binds to 23S rRNA. Forms part of two intersubunit bridges in the 70S ribosome.</text>
</comment>
<comment type="subunit">
    <text evidence="1">Part of the 50S ribosomal subunit. Forms a cluster with proteins L3 and L19. In the 70S ribosome, L14 and L19 interact and together make contacts with the 16S rRNA in bridges B5 and B8.</text>
</comment>
<comment type="similarity">
    <text evidence="1">Belongs to the universal ribosomal protein uL14 family.</text>
</comment>
<reference key="1">
    <citation type="journal article" date="2005" name="Genome Res.">
        <title>Genome sequence of Blochmannia pennsylvanicus indicates parallel evolutionary trends among bacterial mutualists of insects.</title>
        <authorList>
            <person name="Degnan P.H."/>
            <person name="Lazarus A.B."/>
            <person name="Wernegreen J.J."/>
        </authorList>
    </citation>
    <scope>NUCLEOTIDE SEQUENCE [LARGE SCALE GENOMIC DNA]</scope>
    <source>
        <strain>BPEN</strain>
    </source>
</reference>
<protein>
    <recommendedName>
        <fullName evidence="1">Large ribosomal subunit protein uL14</fullName>
    </recommendedName>
    <alternativeName>
        <fullName evidence="2">50S ribosomal protein L14</fullName>
    </alternativeName>
</protein>
<dbReference type="EMBL" id="CP000016">
    <property type="protein sequence ID" value="AAZ40842.1"/>
    <property type="molecule type" value="Genomic_DNA"/>
</dbReference>
<dbReference type="RefSeq" id="WP_011282749.1">
    <property type="nucleotide sequence ID" value="NC_007292.1"/>
</dbReference>
<dbReference type="SMR" id="Q493J8"/>
<dbReference type="STRING" id="291272.BPEN_208"/>
<dbReference type="KEGG" id="bpn:BPEN_208"/>
<dbReference type="eggNOG" id="COG0093">
    <property type="taxonomic scope" value="Bacteria"/>
</dbReference>
<dbReference type="HOGENOM" id="CLU_095071_2_1_6"/>
<dbReference type="OrthoDB" id="9806379at2"/>
<dbReference type="Proteomes" id="UP000007794">
    <property type="component" value="Chromosome"/>
</dbReference>
<dbReference type="GO" id="GO:0022625">
    <property type="term" value="C:cytosolic large ribosomal subunit"/>
    <property type="evidence" value="ECO:0007669"/>
    <property type="project" value="TreeGrafter"/>
</dbReference>
<dbReference type="GO" id="GO:0070180">
    <property type="term" value="F:large ribosomal subunit rRNA binding"/>
    <property type="evidence" value="ECO:0007669"/>
    <property type="project" value="TreeGrafter"/>
</dbReference>
<dbReference type="GO" id="GO:0003735">
    <property type="term" value="F:structural constituent of ribosome"/>
    <property type="evidence" value="ECO:0007669"/>
    <property type="project" value="InterPro"/>
</dbReference>
<dbReference type="GO" id="GO:0006412">
    <property type="term" value="P:translation"/>
    <property type="evidence" value="ECO:0007669"/>
    <property type="project" value="UniProtKB-UniRule"/>
</dbReference>
<dbReference type="CDD" id="cd00337">
    <property type="entry name" value="Ribosomal_uL14"/>
    <property type="match status" value="1"/>
</dbReference>
<dbReference type="FunFam" id="2.40.150.20:FF:000001">
    <property type="entry name" value="50S ribosomal protein L14"/>
    <property type="match status" value="1"/>
</dbReference>
<dbReference type="Gene3D" id="2.40.150.20">
    <property type="entry name" value="Ribosomal protein L14"/>
    <property type="match status" value="1"/>
</dbReference>
<dbReference type="HAMAP" id="MF_01367">
    <property type="entry name" value="Ribosomal_uL14"/>
    <property type="match status" value="1"/>
</dbReference>
<dbReference type="InterPro" id="IPR000218">
    <property type="entry name" value="Ribosomal_uL14"/>
</dbReference>
<dbReference type="InterPro" id="IPR005745">
    <property type="entry name" value="Ribosomal_uL14_bac-type"/>
</dbReference>
<dbReference type="InterPro" id="IPR019972">
    <property type="entry name" value="Ribosomal_uL14_CS"/>
</dbReference>
<dbReference type="InterPro" id="IPR036853">
    <property type="entry name" value="Ribosomal_uL14_sf"/>
</dbReference>
<dbReference type="NCBIfam" id="TIGR01067">
    <property type="entry name" value="rplN_bact"/>
    <property type="match status" value="1"/>
</dbReference>
<dbReference type="PANTHER" id="PTHR11761">
    <property type="entry name" value="50S/60S RIBOSOMAL PROTEIN L14/L23"/>
    <property type="match status" value="1"/>
</dbReference>
<dbReference type="PANTHER" id="PTHR11761:SF3">
    <property type="entry name" value="LARGE RIBOSOMAL SUBUNIT PROTEIN UL14M"/>
    <property type="match status" value="1"/>
</dbReference>
<dbReference type="Pfam" id="PF00238">
    <property type="entry name" value="Ribosomal_L14"/>
    <property type="match status" value="1"/>
</dbReference>
<dbReference type="SMART" id="SM01374">
    <property type="entry name" value="Ribosomal_L14"/>
    <property type="match status" value="1"/>
</dbReference>
<dbReference type="SUPFAM" id="SSF50193">
    <property type="entry name" value="Ribosomal protein L14"/>
    <property type="match status" value="1"/>
</dbReference>
<dbReference type="PROSITE" id="PS00049">
    <property type="entry name" value="RIBOSOMAL_L14"/>
    <property type="match status" value="1"/>
</dbReference>
<name>RL14_BLOPB</name>
<organism>
    <name type="scientific">Blochmanniella pennsylvanica (strain BPEN)</name>
    <dbReference type="NCBI Taxonomy" id="291272"/>
    <lineage>
        <taxon>Bacteria</taxon>
        <taxon>Pseudomonadati</taxon>
        <taxon>Pseudomonadota</taxon>
        <taxon>Gammaproteobacteria</taxon>
        <taxon>Enterobacterales</taxon>
        <taxon>Enterobacteriaceae</taxon>
        <taxon>ant endosymbionts</taxon>
        <taxon>Candidatus Blochmanniella</taxon>
    </lineage>
</organism>